<keyword id="KW-0963">Cytoplasm</keyword>
<keyword id="KW-0274">FAD</keyword>
<keyword id="KW-0285">Flavoprotein</keyword>
<keyword id="KW-0520">NAD</keyword>
<keyword id="KW-1185">Reference proteome</keyword>
<keyword id="KW-0819">tRNA processing</keyword>
<name>MNMG_PARL1</name>
<organism>
    <name type="scientific">Parvibaculum lavamentivorans (strain DS-1 / DSM 13023 / NCIMB 13966)</name>
    <dbReference type="NCBI Taxonomy" id="402881"/>
    <lineage>
        <taxon>Bacteria</taxon>
        <taxon>Pseudomonadati</taxon>
        <taxon>Pseudomonadota</taxon>
        <taxon>Alphaproteobacteria</taxon>
        <taxon>Hyphomicrobiales</taxon>
        <taxon>Parvibaculaceae</taxon>
        <taxon>Parvibaculum</taxon>
    </lineage>
</organism>
<sequence>MTRDFDVIVIGGGHAGCEAASAAARAGARTALITHKLATIGEMSCNPAIGGLGKGHLVREVDALDGLMGRVADQAGIQFRLLNRRKGPAVRGPRAQADRKLYRAAMQEAILNHRNLEVIEGGVSDLIVEDGHVAGVIAEDGRQFRARRVVLTTGTFLRGVIHLGTQRIPAGRVGEAPALGLSDRLYGLGFQLGRLKTGTPPRLAGDSIDWSSLEVQPGDDPPVPFSFLTTEITTPQVPCHITRTTAEGHRIIEDNLHVSPVYSGQIEGVGPRYCPSIEDKVVRFRERDSHQIFLEPEGLDDDTIYPNGISTALPEEVQLAFLKTIPGLENVVMRRAGYAIEYDYIDPRELRPTLETKRLGGLYLAGQINGTTGYEEAAAQGLIAGLNAALAERGAEPFILDRAQAYMGVMVDDLITRGVSEPYRMFTSRAEYRLTLRADNADQRLTAAGIGAGVVGERRVMAYEAKARALEAARVLCDGLRLSPTELARRGLKVNQDGVARTAMDLLAYPDIDAGVLAGVWPELAALEPHIAEQMGIEAQYAGYLDRQDADIKAFRRDEGLRLPAEIDYASVLGLSHEVRQKLAKARPATLGQAARVDGVTPAALTTLMIHVKQKRSA</sequence>
<gene>
    <name evidence="1" type="primary">mnmG</name>
    <name evidence="1" type="synonym">gidA</name>
    <name type="ordered locus">Plav_1274</name>
</gene>
<accession>A7HSL1</accession>
<comment type="function">
    <text evidence="1">NAD-binding protein involved in the addition of a carboxymethylaminomethyl (cmnm) group at the wobble position (U34) of certain tRNAs, forming tRNA-cmnm(5)s(2)U34.</text>
</comment>
<comment type="cofactor">
    <cofactor evidence="1">
        <name>FAD</name>
        <dbReference type="ChEBI" id="CHEBI:57692"/>
    </cofactor>
</comment>
<comment type="subunit">
    <text evidence="1">Homodimer. Heterotetramer of two MnmE and two MnmG subunits.</text>
</comment>
<comment type="subcellular location">
    <subcellularLocation>
        <location evidence="1">Cytoplasm</location>
    </subcellularLocation>
</comment>
<comment type="similarity">
    <text evidence="1">Belongs to the MnmG family.</text>
</comment>
<dbReference type="EMBL" id="CP000774">
    <property type="protein sequence ID" value="ABS62894.1"/>
    <property type="molecule type" value="Genomic_DNA"/>
</dbReference>
<dbReference type="RefSeq" id="WP_012110166.1">
    <property type="nucleotide sequence ID" value="NC_009719.1"/>
</dbReference>
<dbReference type="SMR" id="A7HSL1"/>
<dbReference type="STRING" id="402881.Plav_1274"/>
<dbReference type="KEGG" id="pla:Plav_1274"/>
<dbReference type="eggNOG" id="COG0445">
    <property type="taxonomic scope" value="Bacteria"/>
</dbReference>
<dbReference type="HOGENOM" id="CLU_007831_2_2_5"/>
<dbReference type="OrthoDB" id="9815560at2"/>
<dbReference type="Proteomes" id="UP000006377">
    <property type="component" value="Chromosome"/>
</dbReference>
<dbReference type="GO" id="GO:0005829">
    <property type="term" value="C:cytosol"/>
    <property type="evidence" value="ECO:0007669"/>
    <property type="project" value="TreeGrafter"/>
</dbReference>
<dbReference type="GO" id="GO:0050660">
    <property type="term" value="F:flavin adenine dinucleotide binding"/>
    <property type="evidence" value="ECO:0007669"/>
    <property type="project" value="UniProtKB-UniRule"/>
</dbReference>
<dbReference type="GO" id="GO:0030488">
    <property type="term" value="P:tRNA methylation"/>
    <property type="evidence" value="ECO:0007669"/>
    <property type="project" value="TreeGrafter"/>
</dbReference>
<dbReference type="GO" id="GO:0002098">
    <property type="term" value="P:tRNA wobble uridine modification"/>
    <property type="evidence" value="ECO:0007669"/>
    <property type="project" value="InterPro"/>
</dbReference>
<dbReference type="FunFam" id="3.50.50.60:FF:000145">
    <property type="entry name" value="tRNA uridine 5-carboxymethylaminomethyl modification enzyme"/>
    <property type="match status" value="1"/>
</dbReference>
<dbReference type="FunFam" id="1.10.150.570:FF:000001">
    <property type="entry name" value="tRNA uridine 5-carboxymethylaminomethyl modification enzyme MnmG"/>
    <property type="match status" value="1"/>
</dbReference>
<dbReference type="FunFam" id="3.50.50.60:FF:000002">
    <property type="entry name" value="tRNA uridine 5-carboxymethylaminomethyl modification enzyme MnmG"/>
    <property type="match status" value="1"/>
</dbReference>
<dbReference type="Gene3D" id="3.50.50.60">
    <property type="entry name" value="FAD/NAD(P)-binding domain"/>
    <property type="match status" value="2"/>
</dbReference>
<dbReference type="Gene3D" id="1.10.150.570">
    <property type="entry name" value="GidA associated domain, C-terminal subdomain"/>
    <property type="match status" value="1"/>
</dbReference>
<dbReference type="HAMAP" id="MF_00129">
    <property type="entry name" value="MnmG_GidA"/>
    <property type="match status" value="1"/>
</dbReference>
<dbReference type="InterPro" id="IPR036188">
    <property type="entry name" value="FAD/NAD-bd_sf"/>
</dbReference>
<dbReference type="InterPro" id="IPR049312">
    <property type="entry name" value="GIDA_C_N"/>
</dbReference>
<dbReference type="InterPro" id="IPR004416">
    <property type="entry name" value="MnmG"/>
</dbReference>
<dbReference type="InterPro" id="IPR002218">
    <property type="entry name" value="MnmG-rel"/>
</dbReference>
<dbReference type="InterPro" id="IPR020595">
    <property type="entry name" value="MnmG-rel_CS"/>
</dbReference>
<dbReference type="InterPro" id="IPR026904">
    <property type="entry name" value="MnmG_C"/>
</dbReference>
<dbReference type="InterPro" id="IPR047001">
    <property type="entry name" value="MnmG_C_subdom"/>
</dbReference>
<dbReference type="InterPro" id="IPR044920">
    <property type="entry name" value="MnmG_C_subdom_sf"/>
</dbReference>
<dbReference type="InterPro" id="IPR040131">
    <property type="entry name" value="MnmG_N"/>
</dbReference>
<dbReference type="NCBIfam" id="TIGR00136">
    <property type="entry name" value="mnmG_gidA"/>
    <property type="match status" value="1"/>
</dbReference>
<dbReference type="PANTHER" id="PTHR11806">
    <property type="entry name" value="GLUCOSE INHIBITED DIVISION PROTEIN A"/>
    <property type="match status" value="1"/>
</dbReference>
<dbReference type="PANTHER" id="PTHR11806:SF0">
    <property type="entry name" value="PROTEIN MTO1 HOMOLOG, MITOCHONDRIAL"/>
    <property type="match status" value="1"/>
</dbReference>
<dbReference type="Pfam" id="PF01134">
    <property type="entry name" value="GIDA"/>
    <property type="match status" value="1"/>
</dbReference>
<dbReference type="Pfam" id="PF21680">
    <property type="entry name" value="GIDA_C_1st"/>
    <property type="match status" value="1"/>
</dbReference>
<dbReference type="Pfam" id="PF13932">
    <property type="entry name" value="SAM_GIDA_C"/>
    <property type="match status" value="1"/>
</dbReference>
<dbReference type="SMART" id="SM01228">
    <property type="entry name" value="GIDA_assoc_3"/>
    <property type="match status" value="1"/>
</dbReference>
<dbReference type="SUPFAM" id="SSF51905">
    <property type="entry name" value="FAD/NAD(P)-binding domain"/>
    <property type="match status" value="1"/>
</dbReference>
<dbReference type="PROSITE" id="PS01280">
    <property type="entry name" value="GIDA_1"/>
    <property type="match status" value="1"/>
</dbReference>
<dbReference type="PROSITE" id="PS01281">
    <property type="entry name" value="GIDA_2"/>
    <property type="match status" value="1"/>
</dbReference>
<feature type="chain" id="PRO_1000071416" description="tRNA uridine 5-carboxymethylaminomethyl modification enzyme MnmG">
    <location>
        <begin position="1"/>
        <end position="618"/>
    </location>
</feature>
<feature type="binding site" evidence="1">
    <location>
        <begin position="11"/>
        <end position="16"/>
    </location>
    <ligand>
        <name>FAD</name>
        <dbReference type="ChEBI" id="CHEBI:57692"/>
    </ligand>
</feature>
<feature type="binding site" evidence="1">
    <location>
        <begin position="270"/>
        <end position="284"/>
    </location>
    <ligand>
        <name>NAD(+)</name>
        <dbReference type="ChEBI" id="CHEBI:57540"/>
    </ligand>
</feature>
<evidence type="ECO:0000255" key="1">
    <source>
        <dbReference type="HAMAP-Rule" id="MF_00129"/>
    </source>
</evidence>
<protein>
    <recommendedName>
        <fullName evidence="1">tRNA uridine 5-carboxymethylaminomethyl modification enzyme MnmG</fullName>
    </recommendedName>
    <alternativeName>
        <fullName evidence="1">Glucose-inhibited division protein A</fullName>
    </alternativeName>
</protein>
<proteinExistence type="inferred from homology"/>
<reference key="1">
    <citation type="journal article" date="2011" name="Stand. Genomic Sci.">
        <title>Complete genome sequence of Parvibaculum lavamentivorans type strain (DS-1(T)).</title>
        <authorList>
            <person name="Schleheck D."/>
            <person name="Weiss M."/>
            <person name="Pitluck S."/>
            <person name="Bruce D."/>
            <person name="Land M.L."/>
            <person name="Han S."/>
            <person name="Saunders E."/>
            <person name="Tapia R."/>
            <person name="Detter C."/>
            <person name="Brettin T."/>
            <person name="Han J."/>
            <person name="Woyke T."/>
            <person name="Goodwin L."/>
            <person name="Pennacchio L."/>
            <person name="Nolan M."/>
            <person name="Cook A.M."/>
            <person name="Kjelleberg S."/>
            <person name="Thomas T."/>
        </authorList>
    </citation>
    <scope>NUCLEOTIDE SEQUENCE [LARGE SCALE GENOMIC DNA]</scope>
    <source>
        <strain>DS-1 / DSM 13023 / NCIMB 13966</strain>
    </source>
</reference>